<reference key="1">
    <citation type="journal article" date="2010" name="Genome Biol. Evol.">
        <title>Continuing evolution of Burkholderia mallei through genome reduction and large-scale rearrangements.</title>
        <authorList>
            <person name="Losada L."/>
            <person name="Ronning C.M."/>
            <person name="DeShazer D."/>
            <person name="Woods D."/>
            <person name="Fedorova N."/>
            <person name="Kim H.S."/>
            <person name="Shabalina S.A."/>
            <person name="Pearson T.R."/>
            <person name="Brinkac L."/>
            <person name="Tan P."/>
            <person name="Nandi T."/>
            <person name="Crabtree J."/>
            <person name="Badger J."/>
            <person name="Beckstrom-Sternberg S."/>
            <person name="Saqib M."/>
            <person name="Schutzer S.E."/>
            <person name="Keim P."/>
            <person name="Nierman W.C."/>
        </authorList>
    </citation>
    <scope>NUCLEOTIDE SEQUENCE [LARGE SCALE GENOMIC DNA]</scope>
    <source>
        <strain>1710b</strain>
    </source>
</reference>
<organism>
    <name type="scientific">Burkholderia pseudomallei (strain 1710b)</name>
    <dbReference type="NCBI Taxonomy" id="320372"/>
    <lineage>
        <taxon>Bacteria</taxon>
        <taxon>Pseudomonadati</taxon>
        <taxon>Pseudomonadota</taxon>
        <taxon>Betaproteobacteria</taxon>
        <taxon>Burkholderiales</taxon>
        <taxon>Burkholderiaceae</taxon>
        <taxon>Burkholderia</taxon>
        <taxon>pseudomallei group</taxon>
    </lineage>
</organism>
<sequence length="144" mass="15573">MCHAREASPGTGEPEAAPRDNFPREAGSKRGIGAAFETRAQRFLERAGLALVARNVTVRGGEIDLVMRERDGTLVFVEVRARANSRYGGAAASIGARKRMRLLLAAHAFWARTGGANACRFDVVAFEGGRLVWLRDAFRADDAG</sequence>
<accession>Q3JY95</accession>
<name>Y041_BURP1</name>
<feature type="chain" id="PRO_0000336146" description="UPF0102 protein BURPS1710b_0041">
    <location>
        <begin position="1"/>
        <end position="144"/>
    </location>
</feature>
<feature type="region of interest" description="Disordered" evidence="2">
    <location>
        <begin position="1"/>
        <end position="28"/>
    </location>
</feature>
<feature type="compositionally biased region" description="Basic and acidic residues" evidence="2">
    <location>
        <begin position="16"/>
        <end position="28"/>
    </location>
</feature>
<protein>
    <recommendedName>
        <fullName evidence="1">UPF0102 protein BURPS1710b_0041</fullName>
    </recommendedName>
</protein>
<comment type="similarity">
    <text evidence="1">Belongs to the UPF0102 family.</text>
</comment>
<comment type="sequence caution" evidence="3">
    <conflict type="erroneous initiation">
        <sequence resource="EMBL-CDS" id="ABA50479"/>
    </conflict>
</comment>
<dbReference type="EMBL" id="CP000124">
    <property type="protein sequence ID" value="ABA50479.1"/>
    <property type="status" value="ALT_INIT"/>
    <property type="molecule type" value="Genomic_DNA"/>
</dbReference>
<dbReference type="RefSeq" id="WP_004525681.1">
    <property type="nucleotide sequence ID" value="NC_007434.1"/>
</dbReference>
<dbReference type="SMR" id="Q3JY95"/>
<dbReference type="EnsemblBacteria" id="ABA50479">
    <property type="protein sequence ID" value="ABA50479"/>
    <property type="gene ID" value="BURPS1710b_0041"/>
</dbReference>
<dbReference type="KEGG" id="bpm:BURPS1710b_0041"/>
<dbReference type="HOGENOM" id="CLU_115353_1_0_4"/>
<dbReference type="Proteomes" id="UP000002700">
    <property type="component" value="Chromosome I"/>
</dbReference>
<dbReference type="GO" id="GO:0003676">
    <property type="term" value="F:nucleic acid binding"/>
    <property type="evidence" value="ECO:0007669"/>
    <property type="project" value="InterPro"/>
</dbReference>
<dbReference type="Gene3D" id="3.40.1350.10">
    <property type="match status" value="1"/>
</dbReference>
<dbReference type="HAMAP" id="MF_00048">
    <property type="entry name" value="UPF0102"/>
    <property type="match status" value="1"/>
</dbReference>
<dbReference type="InterPro" id="IPR011335">
    <property type="entry name" value="Restrct_endonuc-II-like"/>
</dbReference>
<dbReference type="InterPro" id="IPR011856">
    <property type="entry name" value="tRNA_endonuc-like_dom_sf"/>
</dbReference>
<dbReference type="InterPro" id="IPR003509">
    <property type="entry name" value="UPF0102_YraN-like"/>
</dbReference>
<dbReference type="NCBIfam" id="NF009150">
    <property type="entry name" value="PRK12497.1-3"/>
    <property type="match status" value="1"/>
</dbReference>
<dbReference type="NCBIfam" id="TIGR00252">
    <property type="entry name" value="YraN family protein"/>
    <property type="match status" value="1"/>
</dbReference>
<dbReference type="PANTHER" id="PTHR34039">
    <property type="entry name" value="UPF0102 PROTEIN YRAN"/>
    <property type="match status" value="1"/>
</dbReference>
<dbReference type="PANTHER" id="PTHR34039:SF1">
    <property type="entry name" value="UPF0102 PROTEIN YRAN"/>
    <property type="match status" value="1"/>
</dbReference>
<dbReference type="Pfam" id="PF02021">
    <property type="entry name" value="UPF0102"/>
    <property type="match status" value="1"/>
</dbReference>
<dbReference type="SUPFAM" id="SSF52980">
    <property type="entry name" value="Restriction endonuclease-like"/>
    <property type="match status" value="1"/>
</dbReference>
<gene>
    <name type="ordered locus">BURPS1710b_0041</name>
</gene>
<proteinExistence type="inferred from homology"/>
<evidence type="ECO:0000255" key="1">
    <source>
        <dbReference type="HAMAP-Rule" id="MF_00048"/>
    </source>
</evidence>
<evidence type="ECO:0000256" key="2">
    <source>
        <dbReference type="SAM" id="MobiDB-lite"/>
    </source>
</evidence>
<evidence type="ECO:0000305" key="3"/>